<keyword id="KW-0963">Cytoplasm</keyword>
<keyword id="KW-0597">Phosphoprotein</keyword>
<keyword id="KW-1185">Reference proteome</keyword>
<organism>
    <name type="scientific">Rattus norvegicus</name>
    <name type="common">Rat</name>
    <dbReference type="NCBI Taxonomy" id="10116"/>
    <lineage>
        <taxon>Eukaryota</taxon>
        <taxon>Metazoa</taxon>
        <taxon>Chordata</taxon>
        <taxon>Craniata</taxon>
        <taxon>Vertebrata</taxon>
        <taxon>Euteleostomi</taxon>
        <taxon>Mammalia</taxon>
        <taxon>Eutheria</taxon>
        <taxon>Euarchontoglires</taxon>
        <taxon>Glires</taxon>
        <taxon>Rodentia</taxon>
        <taxon>Myomorpha</taxon>
        <taxon>Muroidea</taxon>
        <taxon>Muridae</taxon>
        <taxon>Murinae</taxon>
        <taxon>Rattus</taxon>
    </lineage>
</organism>
<reference key="1">
    <citation type="submission" date="2005-08" db="EMBL/GenBank/DDBJ databases">
        <authorList>
            <person name="Mural R.J."/>
            <person name="Adams M.D."/>
            <person name="Myers E.W."/>
            <person name="Smith H.O."/>
            <person name="Venter J.C."/>
        </authorList>
    </citation>
    <scope>NUCLEOTIDE SEQUENCE [LARGE SCALE GENOMIC DNA]</scope>
</reference>
<reference key="2">
    <citation type="journal article" date="2004" name="Genome Res.">
        <title>The status, quality, and expansion of the NIH full-length cDNA project: the Mammalian Gene Collection (MGC).</title>
        <authorList>
            <consortium name="The MGC Project Team"/>
        </authorList>
    </citation>
    <scope>NUCLEOTIDE SEQUENCE [LARGE SCALE MRNA] OF 418-817</scope>
    <source>
        <tissue>Thymus</tissue>
    </source>
</reference>
<reference key="3">
    <citation type="journal article" date="2012" name="Nat. Commun.">
        <title>Quantitative maps of protein phosphorylation sites across 14 different rat organs and tissues.</title>
        <authorList>
            <person name="Lundby A."/>
            <person name="Secher A."/>
            <person name="Lage K."/>
            <person name="Nordsborg N.B."/>
            <person name="Dmytriyev A."/>
            <person name="Lundby C."/>
            <person name="Olsen J.V."/>
        </authorList>
    </citation>
    <scope>PHOSPHORYLATION [LARGE SCALE ANALYSIS] AT SER-631</scope>
    <scope>IDENTIFICATION BY MASS SPECTROMETRY [LARGE SCALE ANALYSIS]</scope>
</reference>
<comment type="function">
    <text evidence="3">Required for cytoplasmic pre-assembly of axonemal dyneins, thereby playing a central role in motility in cilia and flagella. Involved in pre-assembly of dynein arm complexes in the cytoplasm before intraflagellar transport loads them for the ciliary compartment.</text>
</comment>
<comment type="subunit">
    <text evidence="3">Interacts with CFAP300. Interacts with DNAI2 and HSPA1A. Interacts with DNAAF4. Interacts with DNAAF6/PIH1D3.</text>
</comment>
<comment type="subcellular location">
    <subcellularLocation>
        <location evidence="3">Cytoplasm</location>
    </subcellularLocation>
    <subcellularLocation>
        <location evidence="1">Dynein axonemal particle</location>
    </subcellularLocation>
    <text evidence="3">Localizes in the apical cytoplasm around the gamma-tubulin-positive pericentriolar region, not in the cilia.</text>
</comment>
<comment type="similarity">
    <text evidence="3">Belongs to the PIH1 family. Kintoun subfamily.</text>
</comment>
<comment type="sequence caution" evidence="5">
    <conflict type="erroneous initiation">
        <sequence resource="EMBL-CDS" id="AAH89901"/>
    </conflict>
    <text>Truncated N-terminus.</text>
</comment>
<comment type="sequence caution" evidence="5">
    <conflict type="erroneous gene model prediction">
        <sequence resource="EMBL-CDS" id="EDM03505"/>
    </conflict>
</comment>
<dbReference type="EMBL" id="CH473947">
    <property type="protein sequence ID" value="EDM03505.1"/>
    <property type="status" value="ALT_SEQ"/>
    <property type="molecule type" value="Genomic_DNA"/>
</dbReference>
<dbReference type="EMBL" id="BC089901">
    <property type="protein sequence ID" value="AAH89901.1"/>
    <property type="status" value="ALT_INIT"/>
    <property type="molecule type" value="mRNA"/>
</dbReference>
<dbReference type="RefSeq" id="NP_001014219.3">
    <property type="nucleotide sequence ID" value="NM_001014197.4"/>
</dbReference>
<dbReference type="SMR" id="Q5FVL7"/>
<dbReference type="FunCoup" id="Q5FVL7">
    <property type="interactions" value="360"/>
</dbReference>
<dbReference type="STRING" id="10116.ENSRNOP00000055960"/>
<dbReference type="GlyGen" id="Q5FVL7">
    <property type="glycosylation" value="2 sites"/>
</dbReference>
<dbReference type="iPTMnet" id="Q5FVL7"/>
<dbReference type="PhosphoSitePlus" id="Q5FVL7"/>
<dbReference type="PaxDb" id="10116-ENSRNOP00000055960"/>
<dbReference type="GeneID" id="362746"/>
<dbReference type="KEGG" id="rno:362746"/>
<dbReference type="UCSC" id="RGD:1310311">
    <property type="organism name" value="rat"/>
</dbReference>
<dbReference type="AGR" id="RGD:1310311"/>
<dbReference type="CTD" id="55172"/>
<dbReference type="RGD" id="1310311">
    <property type="gene designation" value="Dnaaf2"/>
</dbReference>
<dbReference type="eggNOG" id="KOG4356">
    <property type="taxonomic scope" value="Eukaryota"/>
</dbReference>
<dbReference type="InParanoid" id="Q5FVL7"/>
<dbReference type="OrthoDB" id="80587at9989"/>
<dbReference type="PhylomeDB" id="Q5FVL7"/>
<dbReference type="PRO" id="PR:Q5FVL7"/>
<dbReference type="Proteomes" id="UP000002494">
    <property type="component" value="Unplaced"/>
</dbReference>
<dbReference type="Proteomes" id="UP000234681">
    <property type="component" value="Chromosome 6"/>
</dbReference>
<dbReference type="GO" id="GO:0036064">
    <property type="term" value="C:ciliary basal body"/>
    <property type="evidence" value="ECO:0007669"/>
    <property type="project" value="Ensembl"/>
</dbReference>
<dbReference type="GO" id="GO:0005737">
    <property type="term" value="C:cytoplasm"/>
    <property type="evidence" value="ECO:0000250"/>
    <property type="project" value="UniProtKB"/>
</dbReference>
<dbReference type="GO" id="GO:0005829">
    <property type="term" value="C:cytosol"/>
    <property type="evidence" value="ECO:0007669"/>
    <property type="project" value="Ensembl"/>
</dbReference>
<dbReference type="GO" id="GO:0120293">
    <property type="term" value="C:dynein axonemal particle"/>
    <property type="evidence" value="ECO:0000250"/>
    <property type="project" value="UniProtKB"/>
</dbReference>
<dbReference type="GO" id="GO:0005576">
    <property type="term" value="C:extracellular region"/>
    <property type="evidence" value="ECO:0007669"/>
    <property type="project" value="GOC"/>
</dbReference>
<dbReference type="GO" id="GO:0005794">
    <property type="term" value="C:Golgi apparatus"/>
    <property type="evidence" value="ECO:0007669"/>
    <property type="project" value="Ensembl"/>
</dbReference>
<dbReference type="GO" id="GO:0005730">
    <property type="term" value="C:nucleolus"/>
    <property type="evidence" value="ECO:0007669"/>
    <property type="project" value="Ensembl"/>
</dbReference>
<dbReference type="GO" id="GO:0005654">
    <property type="term" value="C:nucleoplasm"/>
    <property type="evidence" value="ECO:0007669"/>
    <property type="project" value="Ensembl"/>
</dbReference>
<dbReference type="GO" id="GO:0101031">
    <property type="term" value="C:protein folding chaperone complex"/>
    <property type="evidence" value="ECO:0000266"/>
    <property type="project" value="RGD"/>
</dbReference>
<dbReference type="GO" id="GO:0070286">
    <property type="term" value="P:axonemal dynein complex assembly"/>
    <property type="evidence" value="ECO:0000250"/>
    <property type="project" value="UniProtKB"/>
</dbReference>
<dbReference type="GO" id="GO:0060285">
    <property type="term" value="P:cilium-dependent cell motility"/>
    <property type="evidence" value="ECO:0000266"/>
    <property type="project" value="RGD"/>
</dbReference>
<dbReference type="GO" id="GO:0003351">
    <property type="term" value="P:epithelial cilium movement involved in extracellular fluid movement"/>
    <property type="evidence" value="ECO:0000266"/>
    <property type="project" value="RGD"/>
</dbReference>
<dbReference type="GO" id="GO:0061966">
    <property type="term" value="P:establishment of left/right asymmetry"/>
    <property type="evidence" value="ECO:0000266"/>
    <property type="project" value="RGD"/>
</dbReference>
<dbReference type="GO" id="GO:0051649">
    <property type="term" value="P:establishment of localization in cell"/>
    <property type="evidence" value="ECO:0000266"/>
    <property type="project" value="RGD"/>
</dbReference>
<dbReference type="GO" id="GO:0001701">
    <property type="term" value="P:in utero embryonic development"/>
    <property type="evidence" value="ECO:0000266"/>
    <property type="project" value="RGD"/>
</dbReference>
<dbReference type="GO" id="GO:0036159">
    <property type="term" value="P:inner dynein arm assembly"/>
    <property type="evidence" value="ECO:0000266"/>
    <property type="project" value="RGD"/>
</dbReference>
<dbReference type="GO" id="GO:0036158">
    <property type="term" value="P:outer dynein arm assembly"/>
    <property type="evidence" value="ECO:0000266"/>
    <property type="project" value="RGD"/>
</dbReference>
<dbReference type="GO" id="GO:0032526">
    <property type="term" value="P:response to retinoic acid"/>
    <property type="evidence" value="ECO:0000266"/>
    <property type="project" value="RGD"/>
</dbReference>
<dbReference type="HAMAP" id="MF_03069">
    <property type="entry name" value="Kintoun"/>
    <property type="match status" value="1"/>
</dbReference>
<dbReference type="InterPro" id="IPR034727">
    <property type="entry name" value="Kintoun"/>
</dbReference>
<dbReference type="InterPro" id="IPR050734">
    <property type="entry name" value="PIH1/Kintoun_subfamily"/>
</dbReference>
<dbReference type="InterPro" id="IPR012981">
    <property type="entry name" value="PIH1_N"/>
</dbReference>
<dbReference type="InterPro" id="IPR041442">
    <property type="entry name" value="PIH1D1/2/3_CS-like"/>
</dbReference>
<dbReference type="PANTHER" id="PTHR22997">
    <property type="entry name" value="PIH1 DOMAIN-CONTAINING PROTEIN 1"/>
    <property type="match status" value="1"/>
</dbReference>
<dbReference type="PANTHER" id="PTHR22997:SF3">
    <property type="entry name" value="PROTEIN KINTOUN"/>
    <property type="match status" value="1"/>
</dbReference>
<dbReference type="Pfam" id="PF08190">
    <property type="entry name" value="PIH1"/>
    <property type="match status" value="1"/>
</dbReference>
<dbReference type="Pfam" id="PF18201">
    <property type="entry name" value="PIH1_CS"/>
    <property type="match status" value="1"/>
</dbReference>
<gene>
    <name evidence="3" type="primary">Dnaaf2</name>
    <name evidence="3" type="synonym">Ktu</name>
</gene>
<proteinExistence type="evidence at protein level"/>
<sequence length="817" mass="89349">MAKTAASSALEDLDLSGEEVQRLTSAFQDPEFRRMFSDYAAEITDPENRRRYEEEITALERERGVEVRFVHPEPGHVLRTSLDGEHRCFVNVCSNSLVGAPSSRPGPGRGGTAAGSHWSLPYSLAPGRQYAGRNGNRYTVYDVVFHPEALALARSHERFREMLDATALEAVEQQFGVRLDRRNAKTLKIKYKGTPEAAVLRTPLPEGVRAQPEGELPGLLPYPPYPYHYPAAAESTARSPASPAPKAVQRPEPTEPRCSVVQRHHVDLQDYRCSRDAAPSTVPHELVVTIELPLLRSAERAELEVKGKLLCLDSRNPDYRLRLSLPYPVDDGRGRAQYNKARRQLVVTLPVALAVARQDFSTTPEGPTAETGTDNIACTSAGDLAGAREESADSSGADHGRKSCVVAPDAGTAKAEGELVPEPEQDFGGDSVTPLGPGEGTTPENRSLLYSAFQSGDAESLAERSGVYGDLSVQTSEEQEGTCHDTSGSDMGGPGTESIKPLCPPLQCNQDEDSLTLLIQVPGIQPQSLHGDLSPFSYELCFSTQDSGYSFTLQFAPENKLSTKEPAISISLNNAVIVLAKSPESHGLWREWYWGLNKDSLEERLFIDEENVNEFLEEVVRSPLKPARSLSPPLIEVLQVTEEQIQIHAKLQECSDPDGLQGKEKGVKEECPLSEKENTEHSTTSTADSNSSVAVEGLKINTCGAVGLQQGCPDVPHVLSGKRLQSEAKMDPEFIRESSTAYSAEEKENIKEPVITKEKKIGGDHLSSLPNKTAVQNTHDFDTIKETNMQDGSVQIIKDHTTHCAFDFQNSLLYDLD</sequence>
<accession>Q5FVL7</accession>
<protein>
    <recommendedName>
        <fullName evidence="3">Protein kintoun</fullName>
    </recommendedName>
    <alternativeName>
        <fullName evidence="3">Dynein assembly factor 2, axonemal</fullName>
    </alternativeName>
</protein>
<feature type="chain" id="PRO_0000365797" description="Protein kintoun">
    <location>
        <begin position="1"/>
        <end position="817"/>
    </location>
</feature>
<feature type="region of interest" description="Disordered" evidence="4">
    <location>
        <begin position="233"/>
        <end position="259"/>
    </location>
</feature>
<feature type="region of interest" description="Disordered" evidence="4">
    <location>
        <begin position="385"/>
        <end position="404"/>
    </location>
</feature>
<feature type="region of interest" description="Disordered" evidence="4">
    <location>
        <begin position="410"/>
        <end position="445"/>
    </location>
</feature>
<feature type="region of interest" description="Disordered" evidence="4">
    <location>
        <begin position="473"/>
        <end position="503"/>
    </location>
</feature>
<feature type="region of interest" description="Disordered" evidence="4">
    <location>
        <begin position="653"/>
        <end position="692"/>
    </location>
</feature>
<feature type="compositionally biased region" description="Basic and acidic residues" evidence="4">
    <location>
        <begin position="386"/>
        <end position="401"/>
    </location>
</feature>
<feature type="compositionally biased region" description="Basic and acidic residues" evidence="4">
    <location>
        <begin position="661"/>
        <end position="680"/>
    </location>
</feature>
<feature type="compositionally biased region" description="Polar residues" evidence="4">
    <location>
        <begin position="681"/>
        <end position="692"/>
    </location>
</feature>
<feature type="modified residue" description="Phosphoserine" evidence="2">
    <location>
        <position position="622"/>
    </location>
</feature>
<feature type="modified residue" description="Phosphoserine" evidence="6">
    <location>
        <position position="631"/>
    </location>
</feature>
<evidence type="ECO:0000250" key="1">
    <source>
        <dbReference type="UniProtKB" id="B1H1W9"/>
    </source>
</evidence>
<evidence type="ECO:0000250" key="2">
    <source>
        <dbReference type="UniProtKB" id="Q9NVR5"/>
    </source>
</evidence>
<evidence type="ECO:0000255" key="3">
    <source>
        <dbReference type="HAMAP-Rule" id="MF_03069"/>
    </source>
</evidence>
<evidence type="ECO:0000256" key="4">
    <source>
        <dbReference type="SAM" id="MobiDB-lite"/>
    </source>
</evidence>
<evidence type="ECO:0000305" key="5"/>
<evidence type="ECO:0007744" key="6">
    <source>
    </source>
</evidence>
<name>KTU_RAT</name>